<geneLocation type="chloroplast"/>
<evidence type="ECO:0000255" key="1">
    <source>
        <dbReference type="HAMAP-Rule" id="MF_01495"/>
    </source>
</evidence>
<comment type="function">
    <text evidence="1">One of the components of the core complex of photosystem II (PSII). It binds chlorophyll and helps catalyze the primary light-induced photochemical processes of PSII. PSII is a light-driven water:plastoquinone oxidoreductase, using light energy to abstract electrons from H(2)O, generating O(2) and a proton gradient subsequently used for ATP formation.</text>
</comment>
<comment type="cofactor">
    <text evidence="1">Binds multiple chlorophylls. PSII binds additional chlorophylls, carotenoids and specific lipids.</text>
</comment>
<comment type="subunit">
    <text evidence="1">PSII is composed of 1 copy each of membrane proteins PsbA, PsbB, PsbC, PsbD, PsbE, PsbF, PsbH, PsbI, PsbJ, PsbK, PsbL, PsbM, PsbT, PsbX, PsbY, PsbZ, Psb30/Ycf12, at least 3 peripheral proteins of the oxygen-evolving complex and a large number of cofactors. It forms dimeric complexes.</text>
</comment>
<comment type="subcellular location">
    <subcellularLocation>
        <location evidence="1">Plastid</location>
        <location evidence="1">Chloroplast thylakoid membrane</location>
        <topology evidence="1">Multi-pass membrane protein</topology>
    </subcellularLocation>
</comment>
<comment type="similarity">
    <text evidence="1">Belongs to the PsbB/PsbC family. PsbB subfamily.</text>
</comment>
<keyword id="KW-0148">Chlorophyll</keyword>
<keyword id="KW-0150">Chloroplast</keyword>
<keyword id="KW-0157">Chromophore</keyword>
<keyword id="KW-0472">Membrane</keyword>
<keyword id="KW-0602">Photosynthesis</keyword>
<keyword id="KW-0604">Photosystem II</keyword>
<keyword id="KW-0934">Plastid</keyword>
<keyword id="KW-0793">Thylakoid</keyword>
<keyword id="KW-0812">Transmembrane</keyword>
<keyword id="KW-1133">Transmembrane helix</keyword>
<organism>
    <name type="scientific">Nasturtium officinale</name>
    <name type="common">Watercress</name>
    <name type="synonym">Rorippa nasturtium-aquaticum</name>
    <dbReference type="NCBI Taxonomy" id="65948"/>
    <lineage>
        <taxon>Eukaryota</taxon>
        <taxon>Viridiplantae</taxon>
        <taxon>Streptophyta</taxon>
        <taxon>Embryophyta</taxon>
        <taxon>Tracheophyta</taxon>
        <taxon>Spermatophyta</taxon>
        <taxon>Magnoliopsida</taxon>
        <taxon>eudicotyledons</taxon>
        <taxon>Gunneridae</taxon>
        <taxon>Pentapetalae</taxon>
        <taxon>rosids</taxon>
        <taxon>malvids</taxon>
        <taxon>Brassicales</taxon>
        <taxon>Brassicaceae</taxon>
        <taxon>Cardamineae</taxon>
        <taxon>Nasturtium</taxon>
    </lineage>
</organism>
<protein>
    <recommendedName>
        <fullName evidence="1">Photosystem II CP47 reaction center protein</fullName>
    </recommendedName>
    <alternativeName>
        <fullName evidence="1">PSII 47 kDa protein</fullName>
    </alternativeName>
    <alternativeName>
        <fullName evidence="1">Protein CP-47</fullName>
    </alternativeName>
</protein>
<reference key="1">
    <citation type="submission" date="2007-03" db="EMBL/GenBank/DDBJ databases">
        <title>Sequencing analysis of Nasturtium officinale chloroplast DNA.</title>
        <authorList>
            <person name="Hosouchi T."/>
            <person name="Tsuruoka H."/>
            <person name="Kotani H."/>
        </authorList>
    </citation>
    <scope>NUCLEOTIDE SEQUENCE [LARGE SCALE GENOMIC DNA]</scope>
</reference>
<name>PSBB_NASOF</name>
<gene>
    <name evidence="1" type="primary">psbB</name>
</gene>
<proteinExistence type="inferred from homology"/>
<accession>A4QLV9</accession>
<feature type="chain" id="PRO_0000359842" description="Photosystem II CP47 reaction center protein">
    <location>
        <begin position="1"/>
        <end position="508"/>
    </location>
</feature>
<feature type="transmembrane region" description="Helical" evidence="1">
    <location>
        <begin position="21"/>
        <end position="36"/>
    </location>
</feature>
<feature type="transmembrane region" description="Helical" evidence="1">
    <location>
        <begin position="101"/>
        <end position="115"/>
    </location>
</feature>
<feature type="transmembrane region" description="Helical" evidence="1">
    <location>
        <begin position="140"/>
        <end position="156"/>
    </location>
</feature>
<feature type="transmembrane region" description="Helical" evidence="1">
    <location>
        <begin position="203"/>
        <end position="218"/>
    </location>
</feature>
<feature type="transmembrane region" description="Helical" evidence="1">
    <location>
        <begin position="237"/>
        <end position="252"/>
    </location>
</feature>
<feature type="transmembrane region" description="Helical" evidence="1">
    <location>
        <begin position="457"/>
        <end position="472"/>
    </location>
</feature>
<sequence>MGLPWYRVHTVVLNDPGRLLSVHIMHTALVAGWAGSMALYELAVFDPSDPVLDPMWRQGMFVIPFMTRLGITNSWGGWNITGGTITNPGLWSYEGVAGAHIVFSGLCFLAAIWHWVYWDLEIFCDERTGKPSLDLPKIFGIHLFLSGVACFGFGAFHVTGLYGPGIWVSDPYGLTGKVQPVNPAWGVEGFDPFVPGGIASHHIAAGTLGILAGLFHLSVRPPQRLYKGLRMGNIETVLSSSIAAVFFAAFVVAGTMWYGSATTPIELFGPTRYQWDQGYFQQEIYRRVSAGLAENQSLSEAWSKIPEKLAFYDYIGNNPAKGGLFRAGSMDNGDGIAVGWLGHPVFRNKEGRELFVRRMPTFFETFPVVLVDGDGIVRADVPFRRAESKYSVEQVGVTVEFYGGELNGVSYSDPATVKKYARRAQLGEVFELDRATLKSDGVFRSSPRGWFTFGHASFALLFFFGHIWHGARTLFRDVFAGIDPDLDAQVEFGAFQKLGDPTTKRQAV</sequence>
<dbReference type="EMBL" id="AP009376">
    <property type="protein sequence ID" value="BAF50664.1"/>
    <property type="molecule type" value="Genomic_DNA"/>
</dbReference>
<dbReference type="RefSeq" id="YP_001123840.1">
    <property type="nucleotide sequence ID" value="NC_009275.1"/>
</dbReference>
<dbReference type="SMR" id="A4QLV9"/>
<dbReference type="GeneID" id="4962167"/>
<dbReference type="GO" id="GO:0009535">
    <property type="term" value="C:chloroplast thylakoid membrane"/>
    <property type="evidence" value="ECO:0007669"/>
    <property type="project" value="UniProtKB-SubCell"/>
</dbReference>
<dbReference type="GO" id="GO:0009523">
    <property type="term" value="C:photosystem II"/>
    <property type="evidence" value="ECO:0007669"/>
    <property type="project" value="UniProtKB-KW"/>
</dbReference>
<dbReference type="GO" id="GO:0016168">
    <property type="term" value="F:chlorophyll binding"/>
    <property type="evidence" value="ECO:0007669"/>
    <property type="project" value="UniProtKB-UniRule"/>
</dbReference>
<dbReference type="GO" id="GO:0045156">
    <property type="term" value="F:electron transporter, transferring electrons within the cyclic electron transport pathway of photosynthesis activity"/>
    <property type="evidence" value="ECO:0007669"/>
    <property type="project" value="InterPro"/>
</dbReference>
<dbReference type="GO" id="GO:0009772">
    <property type="term" value="P:photosynthetic electron transport in photosystem II"/>
    <property type="evidence" value="ECO:0007669"/>
    <property type="project" value="InterPro"/>
</dbReference>
<dbReference type="FunFam" id="3.10.680.10:FF:000001">
    <property type="entry name" value="Photosystem II CP47 reaction center protein"/>
    <property type="match status" value="1"/>
</dbReference>
<dbReference type="Gene3D" id="3.10.680.10">
    <property type="entry name" value="Photosystem II CP47 reaction center protein"/>
    <property type="match status" value="1"/>
</dbReference>
<dbReference type="HAMAP" id="MF_01495">
    <property type="entry name" value="PSII_PsbB_CP47"/>
    <property type="match status" value="1"/>
</dbReference>
<dbReference type="InterPro" id="IPR000932">
    <property type="entry name" value="PS_antenna-like"/>
</dbReference>
<dbReference type="InterPro" id="IPR036001">
    <property type="entry name" value="PS_II_antenna-like_sf"/>
</dbReference>
<dbReference type="InterPro" id="IPR017486">
    <property type="entry name" value="PSII_PsbB"/>
</dbReference>
<dbReference type="NCBIfam" id="TIGR03039">
    <property type="entry name" value="PS_II_CP47"/>
    <property type="match status" value="1"/>
</dbReference>
<dbReference type="PANTHER" id="PTHR33180">
    <property type="entry name" value="PHOTOSYSTEM II CP43 REACTION CENTER PROTEIN"/>
    <property type="match status" value="1"/>
</dbReference>
<dbReference type="PANTHER" id="PTHR33180:SF38">
    <property type="entry name" value="PHOTOSYSTEM II CP47 REACTION CENTER PROTEIN"/>
    <property type="match status" value="1"/>
</dbReference>
<dbReference type="Pfam" id="PF00421">
    <property type="entry name" value="PSII"/>
    <property type="match status" value="1"/>
</dbReference>
<dbReference type="SUPFAM" id="SSF161077">
    <property type="entry name" value="Photosystem II antenna protein-like"/>
    <property type="match status" value="1"/>
</dbReference>